<name>PLAS_CHLRE</name>
<gene>
    <name type="primary">PETE</name>
</gene>
<feature type="transit peptide" description="Chloroplast">
    <location>
        <begin position="1"/>
        <end position="47"/>
    </location>
</feature>
<feature type="chain" id="PRO_0000002886" description="Plastocyanin, chloroplastic">
    <location>
        <begin position="48"/>
        <end position="145"/>
    </location>
</feature>
<feature type="domain" description="Plastocyanin-like">
    <location>
        <begin position="48"/>
        <end position="145"/>
    </location>
</feature>
<feature type="binding site" evidence="1">
    <location>
        <position position="85"/>
    </location>
    <ligand>
        <name>Cu cation</name>
        <dbReference type="ChEBI" id="CHEBI:23378"/>
    </ligand>
</feature>
<feature type="binding site" evidence="1">
    <location>
        <position position="130"/>
    </location>
    <ligand>
        <name>Cu cation</name>
        <dbReference type="ChEBI" id="CHEBI:23378"/>
    </ligand>
</feature>
<feature type="binding site" evidence="1">
    <location>
        <position position="133"/>
    </location>
    <ligand>
        <name>Cu cation</name>
        <dbReference type="ChEBI" id="CHEBI:23378"/>
    </ligand>
</feature>
<feature type="binding site" evidence="1">
    <location>
        <position position="138"/>
    </location>
    <ligand>
        <name>Cu cation</name>
        <dbReference type="ChEBI" id="CHEBI:23378"/>
    </ligand>
</feature>
<feature type="strand" evidence="3">
    <location>
        <begin position="49"/>
        <end position="54"/>
    </location>
</feature>
<feature type="strand" evidence="3">
    <location>
        <begin position="60"/>
        <end position="70"/>
    </location>
</feature>
<feature type="strand" evidence="3">
    <location>
        <begin position="74"/>
        <end position="79"/>
    </location>
</feature>
<feature type="strand" evidence="3">
    <location>
        <begin position="85"/>
        <end position="89"/>
    </location>
</feature>
<feature type="helix" evidence="3">
    <location>
        <begin position="91"/>
        <end position="93"/>
    </location>
</feature>
<feature type="helix" evidence="3">
    <location>
        <begin position="100"/>
        <end position="103"/>
    </location>
</feature>
<feature type="strand" evidence="3">
    <location>
        <begin position="105"/>
        <end position="109"/>
    </location>
</feature>
<feature type="strand" evidence="3">
    <location>
        <begin position="115"/>
        <end position="119"/>
    </location>
</feature>
<feature type="strand" evidence="3">
    <location>
        <begin position="124"/>
        <end position="129"/>
    </location>
</feature>
<feature type="helix" evidence="3">
    <location>
        <begin position="131"/>
        <end position="136"/>
    </location>
</feature>
<feature type="strand" evidence="3">
    <location>
        <begin position="139"/>
        <end position="145"/>
    </location>
</feature>
<dbReference type="EMBL" id="J05524">
    <property type="protein sequence ID" value="AAA33078.1"/>
    <property type="molecule type" value="mRNA"/>
</dbReference>
<dbReference type="EMBL" id="L07282">
    <property type="protein sequence ID" value="AAA33089.1"/>
    <property type="molecule type" value="Genomic_DNA"/>
</dbReference>
<dbReference type="PIR" id="A36569">
    <property type="entry name" value="A36569"/>
</dbReference>
<dbReference type="RefSeq" id="XP_001702952.1">
    <property type="nucleotide sequence ID" value="XM_001702900.1"/>
</dbReference>
<dbReference type="PDB" id="2PLT">
    <property type="method" value="X-ray"/>
    <property type="resolution" value="1.50 A"/>
    <property type="chains" value="A=48-145"/>
</dbReference>
<dbReference type="PDB" id="7ZQE">
    <property type="method" value="EM"/>
    <property type="resolution" value="2.55 A"/>
    <property type="chains" value="M=1-145"/>
</dbReference>
<dbReference type="PDBsum" id="2PLT"/>
<dbReference type="PDBsum" id="7ZQE"/>
<dbReference type="EMDB" id="EMD-14872"/>
<dbReference type="SMR" id="P18068"/>
<dbReference type="BioGRID" id="988265">
    <property type="interactions" value="1"/>
</dbReference>
<dbReference type="PaxDb" id="3055-EDO96805"/>
<dbReference type="ProMEX" id="P18068"/>
<dbReference type="EnsemblPlants" id="PNW85356">
    <property type="protein sequence ID" value="PNW85356"/>
    <property type="gene ID" value="CHLRE_03g182551v5"/>
</dbReference>
<dbReference type="Gramene" id="PNW85356">
    <property type="protein sequence ID" value="PNW85356"/>
    <property type="gene ID" value="CHLRE_03g182551v5"/>
</dbReference>
<dbReference type="KEGG" id="cre:CHLRE_03g182551v5"/>
<dbReference type="eggNOG" id="ENOG502RXIY">
    <property type="taxonomic scope" value="Eukaryota"/>
</dbReference>
<dbReference type="HOGENOM" id="CLU_084115_0_0_1"/>
<dbReference type="OMA" id="LGFFPNK"/>
<dbReference type="OrthoDB" id="197281at2759"/>
<dbReference type="EvolutionaryTrace" id="P18068"/>
<dbReference type="GO" id="GO:0009535">
    <property type="term" value="C:chloroplast thylakoid membrane"/>
    <property type="evidence" value="ECO:0007669"/>
    <property type="project" value="UniProtKB-SubCell"/>
</dbReference>
<dbReference type="GO" id="GO:0005507">
    <property type="term" value="F:copper ion binding"/>
    <property type="evidence" value="ECO:0007669"/>
    <property type="project" value="InterPro"/>
</dbReference>
<dbReference type="GO" id="GO:0009055">
    <property type="term" value="F:electron transfer activity"/>
    <property type="evidence" value="ECO:0007669"/>
    <property type="project" value="InterPro"/>
</dbReference>
<dbReference type="CDD" id="cd04219">
    <property type="entry name" value="Plastocyanin"/>
    <property type="match status" value="1"/>
</dbReference>
<dbReference type="Gene3D" id="2.60.40.420">
    <property type="entry name" value="Cupredoxins - blue copper proteins"/>
    <property type="match status" value="1"/>
</dbReference>
<dbReference type="InterPro" id="IPR000923">
    <property type="entry name" value="BlueCu_1"/>
</dbReference>
<dbReference type="InterPro" id="IPR028871">
    <property type="entry name" value="BlueCu_1_BS"/>
</dbReference>
<dbReference type="InterPro" id="IPR001235">
    <property type="entry name" value="Copper_blue_Plastocyanin"/>
</dbReference>
<dbReference type="InterPro" id="IPR008972">
    <property type="entry name" value="Cupredoxin"/>
</dbReference>
<dbReference type="InterPro" id="IPR002387">
    <property type="entry name" value="Plastocyanin"/>
</dbReference>
<dbReference type="NCBIfam" id="TIGR02656">
    <property type="entry name" value="cyanin_plasto"/>
    <property type="match status" value="1"/>
</dbReference>
<dbReference type="PANTHER" id="PTHR34192">
    <property type="entry name" value="PLASTOCYANIN MAJOR ISOFORM, CHLOROPLASTIC-RELATED"/>
    <property type="match status" value="1"/>
</dbReference>
<dbReference type="PANTHER" id="PTHR34192:SF10">
    <property type="entry name" value="PLASTOCYANIN MAJOR ISOFORM, CHLOROPLASTIC-RELATED"/>
    <property type="match status" value="1"/>
</dbReference>
<dbReference type="Pfam" id="PF00127">
    <property type="entry name" value="Copper-bind"/>
    <property type="match status" value="1"/>
</dbReference>
<dbReference type="PRINTS" id="PR00156">
    <property type="entry name" value="COPPERBLUE"/>
</dbReference>
<dbReference type="PRINTS" id="PR00157">
    <property type="entry name" value="PLASTOCYANIN"/>
</dbReference>
<dbReference type="SUPFAM" id="SSF49503">
    <property type="entry name" value="Cupredoxins"/>
    <property type="match status" value="1"/>
</dbReference>
<dbReference type="PROSITE" id="PS00196">
    <property type="entry name" value="COPPER_BLUE"/>
    <property type="match status" value="1"/>
</dbReference>
<sequence>MKATLRAPASRASAVRPVASLKAAAQRVASVAGVSVASLALTLAAHADATVKLGADSGALEFVPKTLTIKSGETVNFVNNAGFPHNIVFDEDAIPSGVNADAISRDDYLNAPGETYSVKLTAAGEYGYYCEPHQGAGMVGKIIVQ</sequence>
<evidence type="ECO:0000269" key="1">
    <source>
    </source>
</evidence>
<evidence type="ECO:0000305" key="2"/>
<evidence type="ECO:0007829" key="3">
    <source>
        <dbReference type="PDB" id="2PLT"/>
    </source>
</evidence>
<comment type="function">
    <text evidence="1">Participates in electron transfer between P700 and the cytochrome b6-f complex in photosystem I.</text>
</comment>
<comment type="cofactor">
    <cofactor evidence="1">
        <name>Cu(2+)</name>
        <dbReference type="ChEBI" id="CHEBI:29036"/>
    </cofactor>
</comment>
<comment type="subcellular location">
    <subcellularLocation>
        <location evidence="1">Plastid</location>
        <location evidence="1">Chloroplast thylakoid membrane</location>
        <topology evidence="1">Peripheral membrane protein</topology>
        <orientation evidence="1">Lumenal side</orientation>
    </subcellularLocation>
    <text>Loosely bound to the inner thylakoid membrane surface in chloroplasts (PubMed:8399201).</text>
</comment>
<comment type="similarity">
    <text evidence="2">Belongs to the plastocyanin family.</text>
</comment>
<protein>
    <recommendedName>
        <fullName>Plastocyanin, chloroplastic</fullName>
    </recommendedName>
    <alternativeName>
        <fullName>PC6-2</fullName>
    </alternativeName>
</protein>
<keyword id="KW-0002">3D-structure</keyword>
<keyword id="KW-0150">Chloroplast</keyword>
<keyword id="KW-0186">Copper</keyword>
<keyword id="KW-0903">Direct protein sequencing</keyword>
<keyword id="KW-0249">Electron transport</keyword>
<keyword id="KW-0472">Membrane</keyword>
<keyword id="KW-0479">Metal-binding</keyword>
<keyword id="KW-0934">Plastid</keyword>
<keyword id="KW-0793">Thylakoid</keyword>
<keyword id="KW-0809">Transit peptide</keyword>
<keyword id="KW-0813">Transport</keyword>
<accession>P18068</accession>
<proteinExistence type="evidence at protein level"/>
<organism>
    <name type="scientific">Chlamydomonas reinhardtii</name>
    <name type="common">Chlamydomonas smithii</name>
    <dbReference type="NCBI Taxonomy" id="3055"/>
    <lineage>
        <taxon>Eukaryota</taxon>
        <taxon>Viridiplantae</taxon>
        <taxon>Chlorophyta</taxon>
        <taxon>core chlorophytes</taxon>
        <taxon>Chlorophyceae</taxon>
        <taxon>CS clade</taxon>
        <taxon>Chlamydomonadales</taxon>
        <taxon>Chlamydomonadaceae</taxon>
        <taxon>Chlamydomonas</taxon>
    </lineage>
</organism>
<reference key="1">
    <citation type="journal article" date="1990" name="J. Biol. Chem.">
        <title>Isolation and characterization of a complementary DNA clone for an algal pre-apoplastocyanin.</title>
        <authorList>
            <person name="Merchant S."/>
            <person name="Hill K."/>
            <person name="Kim J.H."/>
            <person name="Thompson J."/>
            <person name="Zaitlin D."/>
            <person name="Bogorad L."/>
        </authorList>
    </citation>
    <scope>NUCLEOTIDE SEQUENCE [MRNA]</scope>
    <scope>PARTIAL PROTEIN SEQUENCE</scope>
    <source>
        <strain>2137</strain>
    </source>
</reference>
<reference key="2">
    <citation type="journal article" date="1993" name="J. Biol. Chem.">
        <title>The plastocyanin-deficient phenotype of Chlamydomonas reinhardtii Ac-208 results from a frame-shift mutation in the nuclear gene encoding preapoplastocyanin.</title>
        <authorList>
            <person name="Quinn J."/>
            <person name="Li H.H."/>
            <person name="Singer J."/>
            <person name="Morimoto B."/>
            <person name="Mets L."/>
            <person name="Kindle K."/>
            <person name="Merchant S."/>
        </authorList>
    </citation>
    <scope>NUCLEOTIDE SEQUENCE [GENOMIC DNA]</scope>
</reference>
<reference key="3">
    <citation type="journal article" date="1993" name="Biochemistry">
        <title>The 1.5-A crystal structure of plastocyanin from the green alga Chlamydomonas reinhardtii.</title>
        <authorList>
            <person name="Redinbo M.R."/>
            <person name="Cascio D."/>
            <person name="Choukair M.K."/>
            <person name="Rice D."/>
            <person name="Merchant S."/>
            <person name="Yeates T.O."/>
        </authorList>
    </citation>
    <scope>X-RAY CRYSTALLOGRAPHY (1.50 ANGSTROMS) OF 48-145 IN COMPLEX WITH COPPER</scope>
    <scope>FUNCTION</scope>
    <scope>COFACTOR</scope>
    <scope>SUBCELLULAR LOCATION</scope>
</reference>